<feature type="chain" id="PRO_1000192069" description="Aspartate 1-decarboxylase beta chain" evidence="1">
    <location>
        <begin position="1"/>
        <end position="24"/>
    </location>
</feature>
<feature type="chain" id="PRO_1000192070" description="Aspartate 1-decarboxylase alpha chain" evidence="1">
    <location>
        <begin position="25"/>
        <end position="126"/>
    </location>
</feature>
<feature type="active site" description="Schiff-base intermediate with substrate; via pyruvic acid" evidence="1">
    <location>
        <position position="25"/>
    </location>
</feature>
<feature type="active site" description="Proton donor" evidence="1">
    <location>
        <position position="58"/>
    </location>
</feature>
<feature type="binding site" evidence="1">
    <location>
        <position position="57"/>
    </location>
    <ligand>
        <name>substrate</name>
    </ligand>
</feature>
<feature type="binding site" evidence="1">
    <location>
        <begin position="73"/>
        <end position="75"/>
    </location>
    <ligand>
        <name>substrate</name>
    </ligand>
</feature>
<feature type="modified residue" description="Pyruvic acid (Ser)" evidence="1">
    <location>
        <position position="25"/>
    </location>
</feature>
<keyword id="KW-0068">Autocatalytic cleavage</keyword>
<keyword id="KW-0963">Cytoplasm</keyword>
<keyword id="KW-0210">Decarboxylase</keyword>
<keyword id="KW-0456">Lyase</keyword>
<keyword id="KW-0566">Pantothenate biosynthesis</keyword>
<keyword id="KW-0670">Pyruvate</keyword>
<keyword id="KW-0704">Schiff base</keyword>
<keyword id="KW-0865">Zymogen</keyword>
<evidence type="ECO:0000255" key="1">
    <source>
        <dbReference type="HAMAP-Rule" id="MF_00446"/>
    </source>
</evidence>
<sequence length="126" mass="13858">MIRTMLQGKLHRVKVTQADLHYEGSCAIDQDFLEAAGILEYEAIDIYNVDNGQRFSTYAIAAERGSRIISVNGAAARCACVGDKLIICSYVQMSDAAARLHHPKVAYFEGENQLQRKAKAVPVQVA</sequence>
<reference key="1">
    <citation type="submission" date="2008-02" db="EMBL/GenBank/DDBJ databases">
        <title>Complete sequence of Yersinia pseudotuberculosis YPIII.</title>
        <authorList>
            <consortium name="US DOE Joint Genome Institute"/>
            <person name="Copeland A."/>
            <person name="Lucas S."/>
            <person name="Lapidus A."/>
            <person name="Glavina del Rio T."/>
            <person name="Dalin E."/>
            <person name="Tice H."/>
            <person name="Bruce D."/>
            <person name="Goodwin L."/>
            <person name="Pitluck S."/>
            <person name="Munk A.C."/>
            <person name="Brettin T."/>
            <person name="Detter J.C."/>
            <person name="Han C."/>
            <person name="Tapia R."/>
            <person name="Schmutz J."/>
            <person name="Larimer F."/>
            <person name="Land M."/>
            <person name="Hauser L."/>
            <person name="Challacombe J.F."/>
            <person name="Green L."/>
            <person name="Lindler L.E."/>
            <person name="Nikolich M.P."/>
            <person name="Richardson P."/>
        </authorList>
    </citation>
    <scope>NUCLEOTIDE SEQUENCE [LARGE SCALE GENOMIC DNA]</scope>
    <source>
        <strain>YPIII</strain>
    </source>
</reference>
<comment type="function">
    <text evidence="1">Catalyzes the pyruvoyl-dependent decarboxylation of aspartate to produce beta-alanine.</text>
</comment>
<comment type="catalytic activity">
    <reaction evidence="1">
        <text>L-aspartate + H(+) = beta-alanine + CO2</text>
        <dbReference type="Rhea" id="RHEA:19497"/>
        <dbReference type="ChEBI" id="CHEBI:15378"/>
        <dbReference type="ChEBI" id="CHEBI:16526"/>
        <dbReference type="ChEBI" id="CHEBI:29991"/>
        <dbReference type="ChEBI" id="CHEBI:57966"/>
        <dbReference type="EC" id="4.1.1.11"/>
    </reaction>
</comment>
<comment type="cofactor">
    <cofactor evidence="1">
        <name>pyruvate</name>
        <dbReference type="ChEBI" id="CHEBI:15361"/>
    </cofactor>
    <text evidence="1">Binds 1 pyruvoyl group covalently per subunit.</text>
</comment>
<comment type="pathway">
    <text evidence="1">Cofactor biosynthesis; (R)-pantothenate biosynthesis; beta-alanine from L-aspartate: step 1/1.</text>
</comment>
<comment type="subunit">
    <text evidence="1">Heterooctamer of four alpha and four beta subunits.</text>
</comment>
<comment type="subcellular location">
    <subcellularLocation>
        <location evidence="1">Cytoplasm</location>
    </subcellularLocation>
</comment>
<comment type="PTM">
    <text evidence="1">Is synthesized initially as an inactive proenzyme, which is activated by self-cleavage at a specific serine bond to produce a beta-subunit with a hydroxyl group at its C-terminus and an alpha-subunit with a pyruvoyl group at its N-terminus.</text>
</comment>
<comment type="similarity">
    <text evidence="1">Belongs to the PanD family.</text>
</comment>
<gene>
    <name evidence="1" type="primary">panD</name>
    <name type="ordered locus">YPK_3474</name>
</gene>
<dbReference type="EC" id="4.1.1.11" evidence="1"/>
<dbReference type="EMBL" id="CP000950">
    <property type="protein sequence ID" value="ACA69741.1"/>
    <property type="molecule type" value="Genomic_DNA"/>
</dbReference>
<dbReference type="RefSeq" id="WP_011191751.1">
    <property type="nucleotide sequence ID" value="NZ_CP009792.1"/>
</dbReference>
<dbReference type="SMR" id="B1JK37"/>
<dbReference type="GeneID" id="96664225"/>
<dbReference type="KEGG" id="ypy:YPK_3474"/>
<dbReference type="PATRIC" id="fig|502800.11.peg.4215"/>
<dbReference type="UniPathway" id="UPA00028">
    <property type="reaction ID" value="UER00002"/>
</dbReference>
<dbReference type="GO" id="GO:0005829">
    <property type="term" value="C:cytosol"/>
    <property type="evidence" value="ECO:0007669"/>
    <property type="project" value="TreeGrafter"/>
</dbReference>
<dbReference type="GO" id="GO:0004068">
    <property type="term" value="F:aspartate 1-decarboxylase activity"/>
    <property type="evidence" value="ECO:0007669"/>
    <property type="project" value="UniProtKB-UniRule"/>
</dbReference>
<dbReference type="GO" id="GO:0006523">
    <property type="term" value="P:alanine biosynthetic process"/>
    <property type="evidence" value="ECO:0007669"/>
    <property type="project" value="InterPro"/>
</dbReference>
<dbReference type="GO" id="GO:0015940">
    <property type="term" value="P:pantothenate biosynthetic process"/>
    <property type="evidence" value="ECO:0007669"/>
    <property type="project" value="UniProtKB-UniRule"/>
</dbReference>
<dbReference type="CDD" id="cd06919">
    <property type="entry name" value="Asp_decarbox"/>
    <property type="match status" value="1"/>
</dbReference>
<dbReference type="FunFam" id="2.40.40.20:FF:000004">
    <property type="entry name" value="Aspartate 1-decarboxylase"/>
    <property type="match status" value="1"/>
</dbReference>
<dbReference type="Gene3D" id="2.40.40.20">
    <property type="match status" value="1"/>
</dbReference>
<dbReference type="HAMAP" id="MF_00446">
    <property type="entry name" value="PanD"/>
    <property type="match status" value="1"/>
</dbReference>
<dbReference type="InterPro" id="IPR009010">
    <property type="entry name" value="Asp_de-COase-like_dom_sf"/>
</dbReference>
<dbReference type="InterPro" id="IPR003190">
    <property type="entry name" value="Asp_decarbox"/>
</dbReference>
<dbReference type="NCBIfam" id="TIGR00223">
    <property type="entry name" value="panD"/>
    <property type="match status" value="1"/>
</dbReference>
<dbReference type="PANTHER" id="PTHR21012">
    <property type="entry name" value="ASPARTATE 1-DECARBOXYLASE"/>
    <property type="match status" value="1"/>
</dbReference>
<dbReference type="PANTHER" id="PTHR21012:SF0">
    <property type="entry name" value="ASPARTATE 1-DECARBOXYLASE"/>
    <property type="match status" value="1"/>
</dbReference>
<dbReference type="Pfam" id="PF02261">
    <property type="entry name" value="Asp_decarbox"/>
    <property type="match status" value="1"/>
</dbReference>
<dbReference type="PIRSF" id="PIRSF006246">
    <property type="entry name" value="Asp_decarbox"/>
    <property type="match status" value="1"/>
</dbReference>
<dbReference type="SUPFAM" id="SSF50692">
    <property type="entry name" value="ADC-like"/>
    <property type="match status" value="1"/>
</dbReference>
<organism>
    <name type="scientific">Yersinia pseudotuberculosis serotype O:3 (strain YPIII)</name>
    <dbReference type="NCBI Taxonomy" id="502800"/>
    <lineage>
        <taxon>Bacteria</taxon>
        <taxon>Pseudomonadati</taxon>
        <taxon>Pseudomonadota</taxon>
        <taxon>Gammaproteobacteria</taxon>
        <taxon>Enterobacterales</taxon>
        <taxon>Yersiniaceae</taxon>
        <taxon>Yersinia</taxon>
    </lineage>
</organism>
<name>PAND_YERPY</name>
<accession>B1JK37</accession>
<protein>
    <recommendedName>
        <fullName evidence="1">Aspartate 1-decarboxylase</fullName>
        <ecNumber evidence="1">4.1.1.11</ecNumber>
    </recommendedName>
    <alternativeName>
        <fullName evidence="1">Aspartate alpha-decarboxylase</fullName>
    </alternativeName>
    <component>
        <recommendedName>
            <fullName evidence="1">Aspartate 1-decarboxylase beta chain</fullName>
        </recommendedName>
    </component>
    <component>
        <recommendedName>
            <fullName evidence="1">Aspartate 1-decarboxylase alpha chain</fullName>
        </recommendedName>
    </component>
</protein>
<proteinExistence type="inferred from homology"/>